<reference key="1">
    <citation type="journal article" date="2012" name="PLoS ONE">
        <title>Characterization of profilin polymorphism in pollen with a focus on multifunctionality.</title>
        <authorList>
            <person name="Jimenez-Lopez J.C."/>
            <person name="Morales S."/>
            <person name="Castro A.J."/>
            <person name="Volkmann D."/>
            <person name="Rodriguez-Garcia M.I."/>
            <person name="Alche Jde D."/>
        </authorList>
    </citation>
    <scope>NUCLEOTIDE SEQUENCE [MRNA]</scope>
    <scope>POLYMORPHISM</scope>
    <source>
        <strain>cv. Picual</strain>
        <tissue>Pollen</tissue>
    </source>
</reference>
<reference key="2">
    <citation type="journal article" date="2013" name="PLoS ONE">
        <title>Analysis of the effects of polymorphism on pollen profilin structural functionality and the generation of conformational, T- and B-cell epitopes.</title>
        <authorList>
            <person name="Jimenez-Lopez J.C."/>
            <person name="Rodriguez-Garcia M.I."/>
            <person name="Alche J.D."/>
        </authorList>
    </citation>
    <scope>3D-STRUCTURE MODELING</scope>
    <scope>DISULFIDE BOND</scope>
</reference>
<name>PROAP_OLEEU</name>
<feature type="initiator methionine" description="Removed" evidence="1">
    <location>
        <position position="1"/>
    </location>
</feature>
<feature type="chain" id="PRO_0000425007" description="Profilin-1">
    <location>
        <begin position="2"/>
        <end position="134"/>
    </location>
</feature>
<feature type="short sequence motif" description="Involved in PIP2 interaction">
    <location>
        <begin position="84"/>
        <end position="100"/>
    </location>
</feature>
<feature type="modified residue" description="Phosphothreonine" evidence="1">
    <location>
        <position position="114"/>
    </location>
</feature>
<feature type="disulfide bond" evidence="3">
    <location>
        <begin position="13"/>
        <end position="118"/>
    </location>
</feature>
<accession>P0DKF7</accession>
<accession>A4GDQ9</accession>
<evidence type="ECO:0000250" key="1"/>
<evidence type="ECO:0000305" key="2"/>
<evidence type="ECO:0000305" key="3">
    <source>
    </source>
</evidence>
<keyword id="KW-0009">Actin-binding</keyword>
<keyword id="KW-0020">Allergen</keyword>
<keyword id="KW-0963">Cytoplasm</keyword>
<keyword id="KW-0206">Cytoskeleton</keyword>
<keyword id="KW-1015">Disulfide bond</keyword>
<keyword id="KW-0597">Phosphoprotein</keyword>
<proteinExistence type="evidence at protein level"/>
<sequence>MSWQTYVDDHLMCDIEGHEGHRLTAAAIVGHDGSVWAQSATFPQFKPEEMNGIMTDFNEPGHLAPTGLHLGGTKYMVIQGEAGAVIRGKKGSGGITIKKTGQALVCGIYEEPVTPGQCNMVVERLGDYLLEQGL</sequence>
<comment type="function">
    <text evidence="1">Binds to actin and affects the structure of the cytoskeleton. At high concentrations, profilin prevents the polymerization of actin, whereas it enhances it at low concentrations (By similarity).</text>
</comment>
<comment type="subunit">
    <text evidence="1">Occurs in many kinds of cells as a complex with monomeric actin in a 1:1 ratio.</text>
</comment>
<comment type="subcellular location">
    <subcellularLocation>
        <location evidence="1">Cytoplasm</location>
        <location evidence="1">Cytoskeleton</location>
    </subcellularLocation>
</comment>
<comment type="PTM">
    <text evidence="1">Phosphorylated by MAP kinases.</text>
</comment>
<comment type="polymorphism">
    <text>Several isoforms of the allergen exist due to polymorphism.</text>
</comment>
<comment type="allergen">
    <text>Causes an allergic reaction in human.</text>
</comment>
<comment type="miscellaneous">
    <text evidence="3">The variability of the residues taking part of IgE-binding epitopes might be responsible of the difference in cross-reactivity among olive pollen cultivars, and between distantly related pollen species, leading to a variable range of allergy reactions among atopic patients.</text>
</comment>
<comment type="similarity">
    <text evidence="2">Belongs to the profilin family.</text>
</comment>
<organism>
    <name type="scientific">Olea europaea</name>
    <name type="common">Common olive</name>
    <dbReference type="NCBI Taxonomy" id="4146"/>
    <lineage>
        <taxon>Eukaryota</taxon>
        <taxon>Viridiplantae</taxon>
        <taxon>Streptophyta</taxon>
        <taxon>Embryophyta</taxon>
        <taxon>Tracheophyta</taxon>
        <taxon>Spermatophyta</taxon>
        <taxon>Magnoliopsida</taxon>
        <taxon>eudicotyledons</taxon>
        <taxon>Gunneridae</taxon>
        <taxon>Pentapetalae</taxon>
        <taxon>asterids</taxon>
        <taxon>lamiids</taxon>
        <taxon>Lamiales</taxon>
        <taxon>Oleaceae</taxon>
        <taxon>Oleeae</taxon>
        <taxon>Olea</taxon>
    </lineage>
</organism>
<dbReference type="EMBL" id="DQ317581">
    <property type="protein sequence ID" value="ABC47424.1"/>
    <property type="molecule type" value="mRNA"/>
</dbReference>
<dbReference type="EMBL" id="DQ317582">
    <property type="protein sequence ID" value="ABC47425.1"/>
    <property type="molecule type" value="mRNA"/>
</dbReference>
<dbReference type="SMR" id="P0DKF7"/>
<dbReference type="GO" id="GO:0005938">
    <property type="term" value="C:cell cortex"/>
    <property type="evidence" value="ECO:0007669"/>
    <property type="project" value="TreeGrafter"/>
</dbReference>
<dbReference type="GO" id="GO:0005856">
    <property type="term" value="C:cytoskeleton"/>
    <property type="evidence" value="ECO:0007669"/>
    <property type="project" value="UniProtKB-SubCell"/>
</dbReference>
<dbReference type="GO" id="GO:0003785">
    <property type="term" value="F:actin monomer binding"/>
    <property type="evidence" value="ECO:0007669"/>
    <property type="project" value="TreeGrafter"/>
</dbReference>
<dbReference type="CDD" id="cd00148">
    <property type="entry name" value="PROF"/>
    <property type="match status" value="1"/>
</dbReference>
<dbReference type="FunFam" id="3.30.450.30:FF:000001">
    <property type="entry name" value="Profilin"/>
    <property type="match status" value="1"/>
</dbReference>
<dbReference type="Gene3D" id="3.30.450.30">
    <property type="entry name" value="Dynein light chain 2a, cytoplasmic"/>
    <property type="match status" value="1"/>
</dbReference>
<dbReference type="InterPro" id="IPR048278">
    <property type="entry name" value="PFN"/>
</dbReference>
<dbReference type="InterPro" id="IPR005455">
    <property type="entry name" value="PFN_euk"/>
</dbReference>
<dbReference type="InterPro" id="IPR036140">
    <property type="entry name" value="PFN_sf"/>
</dbReference>
<dbReference type="InterPro" id="IPR027310">
    <property type="entry name" value="Profilin_CS"/>
</dbReference>
<dbReference type="PANTHER" id="PTHR11604">
    <property type="entry name" value="PROFILIN"/>
    <property type="match status" value="1"/>
</dbReference>
<dbReference type="PANTHER" id="PTHR11604:SF25">
    <property type="entry name" value="PROFILIN-5"/>
    <property type="match status" value="1"/>
</dbReference>
<dbReference type="Pfam" id="PF00235">
    <property type="entry name" value="Profilin"/>
    <property type="match status" value="1"/>
</dbReference>
<dbReference type="PRINTS" id="PR00392">
    <property type="entry name" value="PROFILIN"/>
</dbReference>
<dbReference type="PRINTS" id="PR01640">
    <property type="entry name" value="PROFILINPLNT"/>
</dbReference>
<dbReference type="SMART" id="SM00392">
    <property type="entry name" value="PROF"/>
    <property type="match status" value="1"/>
</dbReference>
<dbReference type="SUPFAM" id="SSF55770">
    <property type="entry name" value="Profilin (actin-binding protein)"/>
    <property type="match status" value="1"/>
</dbReference>
<dbReference type="PROSITE" id="PS00414">
    <property type="entry name" value="PROFILIN"/>
    <property type="match status" value="1"/>
</dbReference>
<protein>
    <recommendedName>
        <fullName>Profilin-1</fullName>
    </recommendedName>
    <alternativeName>
        <fullName>Pollen allergen Ole e 2</fullName>
    </alternativeName>
    <allergenName>Ole e 2</allergenName>
</protein>